<sequence length="435" mass="45452">MSKKKVNLGVRDVPTPFSWVSFSLQHLFAMFGSTILVPKLVGMSPAVALVTSGIGTLAYLLITKGQIPAYLGSSFAFISPIILVKATGGPGAAMVGAFLAGLVYGLIALLIRQLGTGWLMKILPPVVVGPVIIVIGLGLASTAVNMAMYADPNASELVYSLKHFSVAGVTLAITIICAIFLRGFLSLIPVLIGIIGGYLFALTQGIVNFQPVLDAKWFAVPEFIIPFKDYSPSVTLGIAAAMVPVAFVTMSEHIGHQMVLSKVVGQDFIKKPGLHRSIMGDSVATILASLIGGPPTTTYGENIGVLAITRVFSVFVIGGAAVIALCFGFIGKISALISSVPSAVMGGVSFLLFGIIASSGLRMLIDNKIDYENNRNLIITSVILVIGVGGAFIQVSQGGFQVSGMALAAIVGVILNLILPQAKEEQADTSEQHHI</sequence>
<gene>
    <name type="primary">pyrP</name>
    <name type="ordered locus">BSU15480</name>
</gene>
<accession>P39766</accession>
<accession>P25982</accession>
<feature type="chain" id="PRO_0000165957" description="Uracil permease">
    <location>
        <begin position="1"/>
        <end position="435"/>
    </location>
</feature>
<feature type="transmembrane region" description="Helical" evidence="1">
    <location>
        <begin position="17"/>
        <end position="37"/>
    </location>
</feature>
<feature type="transmembrane region" description="Helical" evidence="1">
    <location>
        <begin position="42"/>
        <end position="62"/>
    </location>
</feature>
<feature type="transmembrane region" description="Helical" evidence="1">
    <location>
        <begin position="67"/>
        <end position="87"/>
    </location>
</feature>
<feature type="transmembrane region" description="Helical" evidence="1">
    <location>
        <begin position="91"/>
        <end position="111"/>
    </location>
</feature>
<feature type="transmembrane region" description="Helical" evidence="1">
    <location>
        <begin position="122"/>
        <end position="142"/>
    </location>
</feature>
<feature type="transmembrane region" description="Helical" evidence="1">
    <location>
        <begin position="161"/>
        <end position="181"/>
    </location>
</feature>
<feature type="transmembrane region" description="Helical" evidence="1">
    <location>
        <begin position="191"/>
        <end position="213"/>
    </location>
</feature>
<feature type="transmembrane region" description="Helical" evidence="1">
    <location>
        <begin position="234"/>
        <end position="254"/>
    </location>
</feature>
<feature type="transmembrane region" description="Helical" evidence="1">
    <location>
        <begin position="311"/>
        <end position="331"/>
    </location>
</feature>
<feature type="transmembrane region" description="Helical" evidence="1">
    <location>
        <begin position="336"/>
        <end position="356"/>
    </location>
</feature>
<feature type="transmembrane region" description="Helical" evidence="1">
    <location>
        <begin position="376"/>
        <end position="396"/>
    </location>
</feature>
<feature type="transmembrane region" description="Helical" evidence="1">
    <location>
        <begin position="399"/>
        <end position="419"/>
    </location>
</feature>
<feature type="sequence conflict" description="In Ref. 1; AAA21266." evidence="2" ref="1">
    <original>SPSVTLGIAAAMVPVAFVTMSEHIGHQMVL</original>
    <variation>HRQLRSASQPQWFLSHLSQCQSISATNGAE</variation>
    <location>
        <begin position="231"/>
        <end position="260"/>
    </location>
</feature>
<feature type="sequence conflict" description="In Ref. 1; AAA21266." evidence="2" ref="1">
    <original>KP</original>
    <variation>A</variation>
    <location>
        <begin position="271"/>
        <end position="272"/>
    </location>
</feature>
<organism>
    <name type="scientific">Bacillus subtilis (strain 168)</name>
    <dbReference type="NCBI Taxonomy" id="224308"/>
    <lineage>
        <taxon>Bacteria</taxon>
        <taxon>Bacillati</taxon>
        <taxon>Bacillota</taxon>
        <taxon>Bacilli</taxon>
        <taxon>Bacillales</taxon>
        <taxon>Bacillaceae</taxon>
        <taxon>Bacillus</taxon>
    </lineage>
</organism>
<protein>
    <recommendedName>
        <fullName>Uracil permease</fullName>
    </recommendedName>
    <alternativeName>
        <fullName>Uracil transporter</fullName>
    </alternativeName>
</protein>
<proteinExistence type="evidence at protein level"/>
<name>PYRP_BACSU</name>
<keyword id="KW-1003">Cell membrane</keyword>
<keyword id="KW-0472">Membrane</keyword>
<keyword id="KW-1185">Reference proteome</keyword>
<keyword id="KW-0812">Transmembrane</keyword>
<keyword id="KW-1133">Transmembrane helix</keyword>
<keyword id="KW-0813">Transport</keyword>
<comment type="function">
    <text>Transport of uracil in the cell.</text>
</comment>
<comment type="subcellular location">
    <subcellularLocation>
        <location evidence="2">Cell membrane</location>
        <topology evidence="2">Multi-pass membrane protein</topology>
    </subcellularLocation>
</comment>
<comment type="similarity">
    <text evidence="2">Belongs to the nucleobase:cation symporter-2 (NCS2) (TC 2.A.40) family.</text>
</comment>
<evidence type="ECO:0000255" key="1"/>
<evidence type="ECO:0000305" key="2"/>
<dbReference type="EMBL" id="M59757">
    <property type="protein sequence ID" value="AAA21266.1"/>
    <property type="molecule type" value="Genomic_DNA"/>
</dbReference>
<dbReference type="EMBL" id="AL009126">
    <property type="protein sequence ID" value="CAB13422.2"/>
    <property type="molecule type" value="Genomic_DNA"/>
</dbReference>
<dbReference type="PIR" id="A38984">
    <property type="entry name" value="A57986"/>
</dbReference>
<dbReference type="RefSeq" id="NP_389431.2">
    <property type="nucleotide sequence ID" value="NC_000964.3"/>
</dbReference>
<dbReference type="RefSeq" id="WP_003221479.1">
    <property type="nucleotide sequence ID" value="NZ_OZ025638.1"/>
</dbReference>
<dbReference type="RefSeq" id="WP_009967203.1">
    <property type="nucleotide sequence ID" value="NZ_CM000487.1"/>
</dbReference>
<dbReference type="SMR" id="P39766"/>
<dbReference type="FunCoup" id="P39766">
    <property type="interactions" value="48"/>
</dbReference>
<dbReference type="STRING" id="224308.BSU15480"/>
<dbReference type="TCDB" id="2.A.40.1.4">
    <property type="family name" value="the nucleobase/ascorbate transporter (nat) or nucleobase:cation symporter-2 (ncs2) family"/>
</dbReference>
<dbReference type="PaxDb" id="224308-BSU15480"/>
<dbReference type="EnsemblBacteria" id="CAB13422">
    <property type="protein sequence ID" value="CAB13422"/>
    <property type="gene ID" value="BSU_15480"/>
</dbReference>
<dbReference type="GeneID" id="11239417"/>
<dbReference type="GeneID" id="936604"/>
<dbReference type="KEGG" id="bsu:BSU15480"/>
<dbReference type="PATRIC" id="fig|224308.179.peg.1687"/>
<dbReference type="eggNOG" id="COG2233">
    <property type="taxonomic scope" value="Bacteria"/>
</dbReference>
<dbReference type="InParanoid" id="P39766"/>
<dbReference type="OrthoDB" id="9779092at2"/>
<dbReference type="PhylomeDB" id="P39766"/>
<dbReference type="BioCyc" id="BSUB:BSU15480-MONOMER"/>
<dbReference type="PRO" id="PR:P39766"/>
<dbReference type="Proteomes" id="UP000001570">
    <property type="component" value="Chromosome"/>
</dbReference>
<dbReference type="GO" id="GO:0005886">
    <property type="term" value="C:plasma membrane"/>
    <property type="evidence" value="ECO:0000318"/>
    <property type="project" value="GO_Central"/>
</dbReference>
<dbReference type="GO" id="GO:0015505">
    <property type="term" value="F:uracil:monoatomic cation symporter activity"/>
    <property type="evidence" value="ECO:0000318"/>
    <property type="project" value="GO_Central"/>
</dbReference>
<dbReference type="GO" id="GO:0098721">
    <property type="term" value="P:uracil import across plasma membrane"/>
    <property type="evidence" value="ECO:0000318"/>
    <property type="project" value="GO_Central"/>
</dbReference>
<dbReference type="InterPro" id="IPR006043">
    <property type="entry name" value="NCS2"/>
</dbReference>
<dbReference type="InterPro" id="IPR006042">
    <property type="entry name" value="Xan_ur_permease"/>
</dbReference>
<dbReference type="NCBIfam" id="TIGR00801">
    <property type="entry name" value="ncs2"/>
    <property type="match status" value="1"/>
</dbReference>
<dbReference type="PANTHER" id="PTHR42810">
    <property type="entry name" value="PURINE PERMEASE C1399.01C-RELATED"/>
    <property type="match status" value="1"/>
</dbReference>
<dbReference type="PANTHER" id="PTHR42810:SF2">
    <property type="entry name" value="PURINE PERMEASE C1399.01C-RELATED"/>
    <property type="match status" value="1"/>
</dbReference>
<dbReference type="Pfam" id="PF00860">
    <property type="entry name" value="Xan_ur_permease"/>
    <property type="match status" value="1"/>
</dbReference>
<dbReference type="PROSITE" id="PS01116">
    <property type="entry name" value="XANTH_URACIL_PERMASE"/>
    <property type="match status" value="1"/>
</dbReference>
<reference key="1">
    <citation type="journal article" date="1991" name="J. Biol. Chem.">
        <title>Functional organization and nucleotide sequence of the Bacillus subtilis pyrimidine biosynthetic operon.</title>
        <authorList>
            <person name="Quinn C.L."/>
            <person name="Stephenson B.T."/>
            <person name="Switzer R.L."/>
        </authorList>
    </citation>
    <scope>NUCLEOTIDE SEQUENCE [GENOMIC DNA]</scope>
</reference>
<reference key="2">
    <citation type="journal article" date="1994" name="J. Bacteriol.">
        <title>Regulation of the Bacillus subtilis pyrimidine biosynthetic (pyr) gene cluster by an autogenous transcriptional attenuation mechanism.</title>
        <authorList>
            <person name="Turner R.J."/>
            <person name="Lu Y."/>
            <person name="Switzer R.L."/>
        </authorList>
    </citation>
    <scope>SEQUENCE REVISION</scope>
    <scope>CHARACTERIZATION</scope>
</reference>
<reference key="3">
    <citation type="journal article" date="1997" name="Nature">
        <title>The complete genome sequence of the Gram-positive bacterium Bacillus subtilis.</title>
        <authorList>
            <person name="Kunst F."/>
            <person name="Ogasawara N."/>
            <person name="Moszer I."/>
            <person name="Albertini A.M."/>
            <person name="Alloni G."/>
            <person name="Azevedo V."/>
            <person name="Bertero M.G."/>
            <person name="Bessieres P."/>
            <person name="Bolotin A."/>
            <person name="Borchert S."/>
            <person name="Borriss R."/>
            <person name="Boursier L."/>
            <person name="Brans A."/>
            <person name="Braun M."/>
            <person name="Brignell S.C."/>
            <person name="Bron S."/>
            <person name="Brouillet S."/>
            <person name="Bruschi C.V."/>
            <person name="Caldwell B."/>
            <person name="Capuano V."/>
            <person name="Carter N.M."/>
            <person name="Choi S.-K."/>
            <person name="Codani J.-J."/>
            <person name="Connerton I.F."/>
            <person name="Cummings N.J."/>
            <person name="Daniel R.A."/>
            <person name="Denizot F."/>
            <person name="Devine K.M."/>
            <person name="Duesterhoeft A."/>
            <person name="Ehrlich S.D."/>
            <person name="Emmerson P.T."/>
            <person name="Entian K.-D."/>
            <person name="Errington J."/>
            <person name="Fabret C."/>
            <person name="Ferrari E."/>
            <person name="Foulger D."/>
            <person name="Fritz C."/>
            <person name="Fujita M."/>
            <person name="Fujita Y."/>
            <person name="Fuma S."/>
            <person name="Galizzi A."/>
            <person name="Galleron N."/>
            <person name="Ghim S.-Y."/>
            <person name="Glaser P."/>
            <person name="Goffeau A."/>
            <person name="Golightly E.J."/>
            <person name="Grandi G."/>
            <person name="Guiseppi G."/>
            <person name="Guy B.J."/>
            <person name="Haga K."/>
            <person name="Haiech J."/>
            <person name="Harwood C.R."/>
            <person name="Henaut A."/>
            <person name="Hilbert H."/>
            <person name="Holsappel S."/>
            <person name="Hosono S."/>
            <person name="Hullo M.-F."/>
            <person name="Itaya M."/>
            <person name="Jones L.-M."/>
            <person name="Joris B."/>
            <person name="Karamata D."/>
            <person name="Kasahara Y."/>
            <person name="Klaerr-Blanchard M."/>
            <person name="Klein C."/>
            <person name="Kobayashi Y."/>
            <person name="Koetter P."/>
            <person name="Koningstein G."/>
            <person name="Krogh S."/>
            <person name="Kumano M."/>
            <person name="Kurita K."/>
            <person name="Lapidus A."/>
            <person name="Lardinois S."/>
            <person name="Lauber J."/>
            <person name="Lazarevic V."/>
            <person name="Lee S.-M."/>
            <person name="Levine A."/>
            <person name="Liu H."/>
            <person name="Masuda S."/>
            <person name="Mauel C."/>
            <person name="Medigue C."/>
            <person name="Medina N."/>
            <person name="Mellado R.P."/>
            <person name="Mizuno M."/>
            <person name="Moestl D."/>
            <person name="Nakai S."/>
            <person name="Noback M."/>
            <person name="Noone D."/>
            <person name="O'Reilly M."/>
            <person name="Ogawa K."/>
            <person name="Ogiwara A."/>
            <person name="Oudega B."/>
            <person name="Park S.-H."/>
            <person name="Parro V."/>
            <person name="Pohl T.M."/>
            <person name="Portetelle D."/>
            <person name="Porwollik S."/>
            <person name="Prescott A.M."/>
            <person name="Presecan E."/>
            <person name="Pujic P."/>
            <person name="Purnelle B."/>
            <person name="Rapoport G."/>
            <person name="Rey M."/>
            <person name="Reynolds S."/>
            <person name="Rieger M."/>
            <person name="Rivolta C."/>
            <person name="Rocha E."/>
            <person name="Roche B."/>
            <person name="Rose M."/>
            <person name="Sadaie Y."/>
            <person name="Sato T."/>
            <person name="Scanlan E."/>
            <person name="Schleich S."/>
            <person name="Schroeter R."/>
            <person name="Scoffone F."/>
            <person name="Sekiguchi J."/>
            <person name="Sekowska A."/>
            <person name="Seror S.J."/>
            <person name="Serror P."/>
            <person name="Shin B.-S."/>
            <person name="Soldo B."/>
            <person name="Sorokin A."/>
            <person name="Tacconi E."/>
            <person name="Takagi T."/>
            <person name="Takahashi H."/>
            <person name="Takemaru K."/>
            <person name="Takeuchi M."/>
            <person name="Tamakoshi A."/>
            <person name="Tanaka T."/>
            <person name="Terpstra P."/>
            <person name="Tognoni A."/>
            <person name="Tosato V."/>
            <person name="Uchiyama S."/>
            <person name="Vandenbol M."/>
            <person name="Vannier F."/>
            <person name="Vassarotti A."/>
            <person name="Viari A."/>
            <person name="Wambutt R."/>
            <person name="Wedler E."/>
            <person name="Wedler H."/>
            <person name="Weitzenegger T."/>
            <person name="Winters P."/>
            <person name="Wipat A."/>
            <person name="Yamamoto H."/>
            <person name="Yamane K."/>
            <person name="Yasumoto K."/>
            <person name="Yata K."/>
            <person name="Yoshida K."/>
            <person name="Yoshikawa H.-F."/>
            <person name="Zumstein E."/>
            <person name="Yoshikawa H."/>
            <person name="Danchin A."/>
        </authorList>
    </citation>
    <scope>NUCLEOTIDE SEQUENCE [LARGE SCALE GENOMIC DNA]</scope>
    <source>
        <strain>168</strain>
    </source>
</reference>
<reference key="4">
    <citation type="journal article" date="2009" name="Microbiology">
        <title>From a consortium sequence to a unified sequence: the Bacillus subtilis 168 reference genome a decade later.</title>
        <authorList>
            <person name="Barbe V."/>
            <person name="Cruveiller S."/>
            <person name="Kunst F."/>
            <person name="Lenoble P."/>
            <person name="Meurice G."/>
            <person name="Sekowska A."/>
            <person name="Vallenet D."/>
            <person name="Wang T."/>
            <person name="Moszer I."/>
            <person name="Medigue C."/>
            <person name="Danchin A."/>
        </authorList>
    </citation>
    <scope>SEQUENCE REVISION TO 231-260 AND 271-272</scope>
</reference>